<reference key="1">
    <citation type="journal article" date="2000" name="DNA Res.">
        <title>Structural analysis of Arabidopsis thaliana chromosome 3. II. Sequence features of the 4,251,695 bp regions covered by 90 P1, TAC and BAC clones.</title>
        <authorList>
            <person name="Kaneko T."/>
            <person name="Katoh T."/>
            <person name="Sato S."/>
            <person name="Nakamura Y."/>
            <person name="Asamizu E."/>
            <person name="Tabata S."/>
        </authorList>
    </citation>
    <scope>NUCLEOTIDE SEQUENCE [LARGE SCALE GENOMIC DNA]</scope>
    <source>
        <strain>cv. Columbia</strain>
    </source>
</reference>
<reference key="2">
    <citation type="journal article" date="2017" name="Plant J.">
        <title>Araport11: a complete reannotation of the Arabidopsis thaliana reference genome.</title>
        <authorList>
            <person name="Cheng C.Y."/>
            <person name="Krishnakumar V."/>
            <person name="Chan A.P."/>
            <person name="Thibaud-Nissen F."/>
            <person name="Schobel S."/>
            <person name="Town C.D."/>
        </authorList>
    </citation>
    <scope>GENOME REANNOTATION</scope>
    <source>
        <strain>cv. Columbia</strain>
    </source>
</reference>
<reference key="3">
    <citation type="journal article" date="2003" name="Science">
        <title>Empirical analysis of transcriptional activity in the Arabidopsis genome.</title>
        <authorList>
            <person name="Yamada K."/>
            <person name="Lim J."/>
            <person name="Dale J.M."/>
            <person name="Chen H."/>
            <person name="Shinn P."/>
            <person name="Palm C.J."/>
            <person name="Southwick A.M."/>
            <person name="Wu H.C."/>
            <person name="Kim C.J."/>
            <person name="Nguyen M."/>
            <person name="Pham P.K."/>
            <person name="Cheuk R.F."/>
            <person name="Karlin-Newmann G."/>
            <person name="Liu S.X."/>
            <person name="Lam B."/>
            <person name="Sakano H."/>
            <person name="Wu T."/>
            <person name="Yu G."/>
            <person name="Miranda M."/>
            <person name="Quach H.L."/>
            <person name="Tripp M."/>
            <person name="Chang C.H."/>
            <person name="Lee J.M."/>
            <person name="Toriumi M.J."/>
            <person name="Chan M.M."/>
            <person name="Tang C.C."/>
            <person name="Onodera C.S."/>
            <person name="Deng J.M."/>
            <person name="Akiyama K."/>
            <person name="Ansari Y."/>
            <person name="Arakawa T."/>
            <person name="Banh J."/>
            <person name="Banno F."/>
            <person name="Bowser L."/>
            <person name="Brooks S.Y."/>
            <person name="Carninci P."/>
            <person name="Chao Q."/>
            <person name="Choy N."/>
            <person name="Enju A."/>
            <person name="Goldsmith A.D."/>
            <person name="Gurjal M."/>
            <person name="Hansen N.F."/>
            <person name="Hayashizaki Y."/>
            <person name="Johnson-Hopson C."/>
            <person name="Hsuan V.W."/>
            <person name="Iida K."/>
            <person name="Karnes M."/>
            <person name="Khan S."/>
            <person name="Koesema E."/>
            <person name="Ishida J."/>
            <person name="Jiang P.X."/>
            <person name="Jones T."/>
            <person name="Kawai J."/>
            <person name="Kamiya A."/>
            <person name="Meyers C."/>
            <person name="Nakajima M."/>
            <person name="Narusaka M."/>
            <person name="Seki M."/>
            <person name="Sakurai T."/>
            <person name="Satou M."/>
            <person name="Tamse R."/>
            <person name="Vaysberg M."/>
            <person name="Wallender E.K."/>
            <person name="Wong C."/>
            <person name="Yamamura Y."/>
            <person name="Yuan S."/>
            <person name="Shinozaki K."/>
            <person name="Davis R.W."/>
            <person name="Theologis A."/>
            <person name="Ecker J.R."/>
        </authorList>
    </citation>
    <scope>NUCLEOTIDE SEQUENCE [LARGE SCALE MRNA]</scope>
    <source>
        <strain>cv. Columbia</strain>
    </source>
</reference>
<reference key="4">
    <citation type="submission" date="2006-07" db="EMBL/GenBank/DDBJ databases">
        <title>Large-scale analysis of RIKEN Arabidopsis full-length (RAFL) cDNAs.</title>
        <authorList>
            <person name="Totoki Y."/>
            <person name="Seki M."/>
            <person name="Ishida J."/>
            <person name="Nakajima M."/>
            <person name="Enju A."/>
            <person name="Kamiya A."/>
            <person name="Narusaka M."/>
            <person name="Shin-i T."/>
            <person name="Nakagawa M."/>
            <person name="Sakamoto N."/>
            <person name="Oishi K."/>
            <person name="Kohara Y."/>
            <person name="Kobayashi M."/>
            <person name="Toyoda A."/>
            <person name="Sakaki Y."/>
            <person name="Sakurai T."/>
            <person name="Iida K."/>
            <person name="Akiyama K."/>
            <person name="Satou M."/>
            <person name="Toyoda T."/>
            <person name="Konagaya A."/>
            <person name="Carninci P."/>
            <person name="Kawai J."/>
            <person name="Hayashizaki Y."/>
            <person name="Shinozaki K."/>
        </authorList>
    </citation>
    <scope>NUCLEOTIDE SEQUENCE [LARGE SCALE MRNA]</scope>
    <source>
        <strain>cv. Columbia</strain>
    </source>
</reference>
<reference key="5">
    <citation type="journal article" date="2013" name="Am. J. Bot.">
        <title>Gravity Persistent Signal 1 (GPS1) reveals novel cytochrome P450s involved in gravitropism.</title>
        <authorList>
            <person name="Withers J.C."/>
            <person name="Shipp M.J."/>
            <person name="Rupasinghe S.G."/>
            <person name="Sukumar P."/>
            <person name="Schuler M.A."/>
            <person name="Muday G.K."/>
            <person name="Wyatt S.E."/>
        </authorList>
    </citation>
    <scope>FUNCTION</scope>
    <scope>DISRUPTION PHENOTYPE</scope>
</reference>
<proteinExistence type="evidence at transcript level"/>
<sequence length="515" mass="58709">MEAVISFDFQNCFIFILIFLLTFLCFFFFFKKPKDSRVNFDLPPSPPSLPIIGHVHLLLSTLTHKSLQKLSSRYGPLLYLRIFNVPIILVSSASVAYEIFRTQDVNISSRGVTAVDESLVFGSSSFVTAPYGDYWKFMKKLTVMKLLGPQAQEQSRDIRADDIKRFCRNLLDKARKKESVEIGKEAMNLMNNILCKMSMGRSFSEENGETEKLRGLVTESIGLMKKMFLAVLLRRQLQKLGISLFKKDIMGVSNKFDVLLEKVLVEHREKPEKDQGTVMLDVLLAAYGDENAEYKITKNHIKAFFVDLFIGATDTSVQTIQWTMAEIMNNTHILERMREEIDSVVGKSRLIQETDLPNLPYLHAVIKEALRLHPPGPLLPREFQQGCKIGGFYIPEKTTLLINAYVVMRDPNVWEDPEEFKPERFLASSRSGQEDERREQALKFLPFGSGRRGCPGSNLAYMIVGSAIGMMVQCFDWRIEGEKVNMKEAVKGTILTMAHPLKLTPVTRQPPLTWI</sequence>
<organism>
    <name type="scientific">Arabidopsis thaliana</name>
    <name type="common">Mouse-ear cress</name>
    <dbReference type="NCBI Taxonomy" id="3702"/>
    <lineage>
        <taxon>Eukaryota</taxon>
        <taxon>Viridiplantae</taxon>
        <taxon>Streptophyta</taxon>
        <taxon>Embryophyta</taxon>
        <taxon>Tracheophyta</taxon>
        <taxon>Spermatophyta</taxon>
        <taxon>Magnoliopsida</taxon>
        <taxon>eudicotyledons</taxon>
        <taxon>Gunneridae</taxon>
        <taxon>Pentapetalae</taxon>
        <taxon>rosids</taxon>
        <taxon>malvids</taxon>
        <taxon>Brassicales</taxon>
        <taxon>Brassicaceae</taxon>
        <taxon>Camelineae</taxon>
        <taxon>Arabidopsis</taxon>
    </lineage>
</organism>
<accession>Q9LJY5</accession>
<dbReference type="EC" id="1.14.-.-" evidence="5"/>
<dbReference type="EMBL" id="AP000383">
    <property type="protein sequence ID" value="BAB01873.1"/>
    <property type="molecule type" value="Genomic_DNA"/>
</dbReference>
<dbReference type="EMBL" id="CP002686">
    <property type="protein sequence ID" value="AEE76337.1"/>
    <property type="molecule type" value="Genomic_DNA"/>
</dbReference>
<dbReference type="EMBL" id="BT006472">
    <property type="protein sequence ID" value="AAP21280.1"/>
    <property type="molecule type" value="mRNA"/>
</dbReference>
<dbReference type="EMBL" id="AK228328">
    <property type="protein sequence ID" value="BAF00269.1"/>
    <property type="molecule type" value="mRNA"/>
</dbReference>
<dbReference type="RefSeq" id="NP_188648.1">
    <property type="nucleotide sequence ID" value="NM_112904.3"/>
</dbReference>
<dbReference type="SMR" id="Q9LJY5"/>
<dbReference type="FunCoup" id="Q9LJY5">
    <property type="interactions" value="197"/>
</dbReference>
<dbReference type="STRING" id="3702.Q9LJY5"/>
<dbReference type="PaxDb" id="3702-AT3G20130.1"/>
<dbReference type="ProteomicsDB" id="240442"/>
<dbReference type="EnsemblPlants" id="AT3G20130.1">
    <property type="protein sequence ID" value="AT3G20130.1"/>
    <property type="gene ID" value="AT3G20130"/>
</dbReference>
<dbReference type="GeneID" id="821556"/>
<dbReference type="Gramene" id="AT3G20130.1">
    <property type="protein sequence ID" value="AT3G20130.1"/>
    <property type="gene ID" value="AT3G20130"/>
</dbReference>
<dbReference type="KEGG" id="ath:AT3G20130"/>
<dbReference type="Araport" id="AT3G20130"/>
<dbReference type="TAIR" id="AT3G20130">
    <property type="gene designation" value="CYP705A22"/>
</dbReference>
<dbReference type="eggNOG" id="KOG0156">
    <property type="taxonomic scope" value="Eukaryota"/>
</dbReference>
<dbReference type="HOGENOM" id="CLU_001570_4_0_1"/>
<dbReference type="InParanoid" id="Q9LJY5"/>
<dbReference type="OMA" id="MEIQRCA"/>
<dbReference type="OrthoDB" id="1470350at2759"/>
<dbReference type="PhylomeDB" id="Q9LJY5"/>
<dbReference type="BioCyc" id="ARA:AT3G20130-MONOMER"/>
<dbReference type="PRO" id="PR:Q9LJY5"/>
<dbReference type="Proteomes" id="UP000006548">
    <property type="component" value="Chromosome 3"/>
</dbReference>
<dbReference type="ExpressionAtlas" id="Q9LJY5">
    <property type="expression patterns" value="baseline and differential"/>
</dbReference>
<dbReference type="GO" id="GO:0012505">
    <property type="term" value="C:endomembrane system"/>
    <property type="evidence" value="ECO:0000314"/>
    <property type="project" value="TAIR"/>
</dbReference>
<dbReference type="GO" id="GO:0016020">
    <property type="term" value="C:membrane"/>
    <property type="evidence" value="ECO:0007669"/>
    <property type="project" value="UniProtKB-SubCell"/>
</dbReference>
<dbReference type="GO" id="GO:0020037">
    <property type="term" value="F:heme binding"/>
    <property type="evidence" value="ECO:0007669"/>
    <property type="project" value="InterPro"/>
</dbReference>
<dbReference type="GO" id="GO:0005506">
    <property type="term" value="F:iron ion binding"/>
    <property type="evidence" value="ECO:0007669"/>
    <property type="project" value="InterPro"/>
</dbReference>
<dbReference type="GO" id="GO:0004497">
    <property type="term" value="F:monooxygenase activity"/>
    <property type="evidence" value="ECO:0007669"/>
    <property type="project" value="UniProtKB-KW"/>
</dbReference>
<dbReference type="GO" id="GO:0016705">
    <property type="term" value="F:oxidoreductase activity, acting on paired donors, with incorporation or reduction of molecular oxygen"/>
    <property type="evidence" value="ECO:0007669"/>
    <property type="project" value="InterPro"/>
</dbReference>
<dbReference type="GO" id="GO:0009630">
    <property type="term" value="P:gravitropism"/>
    <property type="evidence" value="ECO:0000315"/>
    <property type="project" value="TAIR"/>
</dbReference>
<dbReference type="GO" id="GO:0009958">
    <property type="term" value="P:positive gravitropism"/>
    <property type="evidence" value="ECO:0000315"/>
    <property type="project" value="TAIR"/>
</dbReference>
<dbReference type="CDD" id="cd20655">
    <property type="entry name" value="CYP93"/>
    <property type="match status" value="1"/>
</dbReference>
<dbReference type="FunFam" id="1.10.630.10:FF:000019">
    <property type="entry name" value="Cytochrome P450 family protein"/>
    <property type="match status" value="1"/>
</dbReference>
<dbReference type="Gene3D" id="1.10.630.10">
    <property type="entry name" value="Cytochrome P450"/>
    <property type="match status" value="1"/>
</dbReference>
<dbReference type="InterPro" id="IPR001128">
    <property type="entry name" value="Cyt_P450"/>
</dbReference>
<dbReference type="InterPro" id="IPR017972">
    <property type="entry name" value="Cyt_P450_CS"/>
</dbReference>
<dbReference type="InterPro" id="IPR002401">
    <property type="entry name" value="Cyt_P450_E_grp-I"/>
</dbReference>
<dbReference type="InterPro" id="IPR036396">
    <property type="entry name" value="Cyt_P450_sf"/>
</dbReference>
<dbReference type="InterPro" id="IPR051103">
    <property type="entry name" value="Plant_metabolite_P450s"/>
</dbReference>
<dbReference type="PANTHER" id="PTHR24298:SF453">
    <property type="entry name" value="CYTOCHROME P450 705A22"/>
    <property type="match status" value="1"/>
</dbReference>
<dbReference type="PANTHER" id="PTHR24298">
    <property type="entry name" value="FLAVONOID 3'-MONOOXYGENASE-RELATED"/>
    <property type="match status" value="1"/>
</dbReference>
<dbReference type="Pfam" id="PF00067">
    <property type="entry name" value="p450"/>
    <property type="match status" value="1"/>
</dbReference>
<dbReference type="PRINTS" id="PR00463">
    <property type="entry name" value="EP450I"/>
</dbReference>
<dbReference type="PRINTS" id="PR00385">
    <property type="entry name" value="P450"/>
</dbReference>
<dbReference type="SUPFAM" id="SSF48264">
    <property type="entry name" value="Cytochrome P450"/>
    <property type="match status" value="1"/>
</dbReference>
<dbReference type="PROSITE" id="PS00086">
    <property type="entry name" value="CYTOCHROME_P450"/>
    <property type="match status" value="1"/>
</dbReference>
<feature type="chain" id="PRO_0000440767" description="Cytochrome P450 705A22">
    <location>
        <begin position="1"/>
        <end position="515"/>
    </location>
</feature>
<feature type="transmembrane region" description="Helical" evidence="2">
    <location>
        <begin position="9"/>
        <end position="29"/>
    </location>
</feature>
<feature type="binding site" description="axial binding residue" evidence="1">
    <location>
        <position position="454"/>
    </location>
    <ligand>
        <name>heme</name>
        <dbReference type="ChEBI" id="CHEBI:30413"/>
    </ligand>
    <ligandPart>
        <name>Fe</name>
        <dbReference type="ChEBI" id="CHEBI:18248"/>
    </ligandPart>
</feature>
<evidence type="ECO:0000250" key="1">
    <source>
        <dbReference type="UniProtKB" id="P04798"/>
    </source>
</evidence>
<evidence type="ECO:0000255" key="2"/>
<evidence type="ECO:0000269" key="3">
    <source>
    </source>
</evidence>
<evidence type="ECO:0000303" key="4">
    <source>
    </source>
</evidence>
<evidence type="ECO:0000305" key="5"/>
<evidence type="ECO:0000312" key="6">
    <source>
        <dbReference type="Araport" id="AT3G20130"/>
    </source>
</evidence>
<evidence type="ECO:0000312" key="7">
    <source>
        <dbReference type="EMBL" id="BAB01873.1"/>
    </source>
</evidence>
<name>C05AK_ARATH</name>
<keyword id="KW-0349">Heme</keyword>
<keyword id="KW-0408">Iron</keyword>
<keyword id="KW-0472">Membrane</keyword>
<keyword id="KW-0479">Metal-binding</keyword>
<keyword id="KW-0503">Monooxygenase</keyword>
<keyword id="KW-0560">Oxidoreductase</keyword>
<keyword id="KW-1185">Reference proteome</keyword>
<keyword id="KW-0812">Transmembrane</keyword>
<keyword id="KW-1133">Transmembrane helix</keyword>
<gene>
    <name evidence="4" type="primary">CYP705A22</name>
    <name evidence="4" type="synonym">GPS1</name>
    <name evidence="6" type="ordered locus">At3g20130</name>
    <name evidence="7" type="ORF">MAL21.16</name>
</gene>
<comment type="function">
    <text evidence="3">Plays a role in the gravitropic response of the inflorescence stems and roots. May affect the synthesis of flavonols that have a role in regulating auxin transport.</text>
</comment>
<comment type="cofactor">
    <cofactor evidence="1">
        <name>heme</name>
        <dbReference type="ChEBI" id="CHEBI:30413"/>
    </cofactor>
</comment>
<comment type="subcellular location">
    <subcellularLocation>
        <location evidence="5">Membrane</location>
        <topology evidence="2">Single-pass membrane protein</topology>
    </subcellularLocation>
</comment>
<comment type="disruption phenotype">
    <text evidence="3">No visible phenotype under normal growth conditions, but mutant plants exhibit loss of tropic response to gravity when reoriented relative to the gravity vector in the cold.</text>
</comment>
<comment type="similarity">
    <text evidence="5">Belongs to the cytochrome P450 family.</text>
</comment>
<protein>
    <recommendedName>
        <fullName evidence="4">Cytochrome P450 705A22</fullName>
        <ecNumber evidence="5">1.14.-.-</ecNumber>
    </recommendedName>
    <alternativeName>
        <fullName evidence="4">Protein GRAVITY PERSISTENCE SIGNAL 1</fullName>
    </alternativeName>
</protein>